<comment type="function">
    <text evidence="1">Catalyzes the transfer of a dimethylallyl group onto the adenine at position 37 in tRNAs that read codons beginning with uridine, leading to the formation of N6-(dimethylallyl)adenosine (i(6)A).</text>
</comment>
<comment type="catalytic activity">
    <reaction evidence="1">
        <text>adenosine(37) in tRNA + dimethylallyl diphosphate = N(6)-dimethylallyladenosine(37) in tRNA + diphosphate</text>
        <dbReference type="Rhea" id="RHEA:26482"/>
        <dbReference type="Rhea" id="RHEA-COMP:10162"/>
        <dbReference type="Rhea" id="RHEA-COMP:10375"/>
        <dbReference type="ChEBI" id="CHEBI:33019"/>
        <dbReference type="ChEBI" id="CHEBI:57623"/>
        <dbReference type="ChEBI" id="CHEBI:74411"/>
        <dbReference type="ChEBI" id="CHEBI:74415"/>
        <dbReference type="EC" id="2.5.1.75"/>
    </reaction>
</comment>
<comment type="cofactor">
    <cofactor evidence="1">
        <name>Mg(2+)</name>
        <dbReference type="ChEBI" id="CHEBI:18420"/>
    </cofactor>
</comment>
<comment type="subunit">
    <text evidence="1">Monomer.</text>
</comment>
<comment type="similarity">
    <text evidence="1">Belongs to the IPP transferase family.</text>
</comment>
<name>MIAA_CARHZ</name>
<organism>
    <name type="scientific">Carboxydothermus hydrogenoformans (strain ATCC BAA-161 / DSM 6008 / Z-2901)</name>
    <dbReference type="NCBI Taxonomy" id="246194"/>
    <lineage>
        <taxon>Bacteria</taxon>
        <taxon>Bacillati</taxon>
        <taxon>Bacillota</taxon>
        <taxon>Clostridia</taxon>
        <taxon>Thermoanaerobacterales</taxon>
        <taxon>Thermoanaerobacteraceae</taxon>
        <taxon>Carboxydothermus</taxon>
    </lineage>
</organism>
<protein>
    <recommendedName>
        <fullName evidence="1">tRNA dimethylallyltransferase</fullName>
        <ecNumber evidence="1">2.5.1.75</ecNumber>
    </recommendedName>
    <alternativeName>
        <fullName evidence="1">Dimethylallyl diphosphate:tRNA dimethylallyltransferase</fullName>
        <shortName evidence="1">DMAPP:tRNA dimethylallyltransferase</shortName>
        <shortName evidence="1">DMATase</shortName>
    </alternativeName>
    <alternativeName>
        <fullName evidence="1">Isopentenyl-diphosphate:tRNA isopentenyltransferase</fullName>
        <shortName evidence="1">IPP transferase</shortName>
        <shortName evidence="1">IPPT</shortName>
        <shortName evidence="1">IPTase</shortName>
    </alternativeName>
</protein>
<keyword id="KW-0067">ATP-binding</keyword>
<keyword id="KW-0460">Magnesium</keyword>
<keyword id="KW-0547">Nucleotide-binding</keyword>
<keyword id="KW-1185">Reference proteome</keyword>
<keyword id="KW-0808">Transferase</keyword>
<keyword id="KW-0819">tRNA processing</keyword>
<evidence type="ECO:0000255" key="1">
    <source>
        <dbReference type="HAMAP-Rule" id="MF_00185"/>
    </source>
</evidence>
<feature type="chain" id="PRO_1000020582" description="tRNA dimethylallyltransferase">
    <location>
        <begin position="1"/>
        <end position="311"/>
    </location>
</feature>
<feature type="region of interest" description="Interaction with substrate tRNA" evidence="1">
    <location>
        <begin position="35"/>
        <end position="38"/>
    </location>
</feature>
<feature type="binding site" evidence="1">
    <location>
        <begin position="10"/>
        <end position="17"/>
    </location>
    <ligand>
        <name>ATP</name>
        <dbReference type="ChEBI" id="CHEBI:30616"/>
    </ligand>
</feature>
<feature type="binding site" evidence="1">
    <location>
        <begin position="12"/>
        <end position="17"/>
    </location>
    <ligand>
        <name>substrate</name>
    </ligand>
</feature>
<feature type="site" description="Interaction with substrate tRNA" evidence="1">
    <location>
        <position position="101"/>
    </location>
</feature>
<feature type="site" description="Interaction with substrate tRNA" evidence="1">
    <location>
        <position position="124"/>
    </location>
</feature>
<sequence length="311" mass="35996">MSEKLIIIVGPTAVGKSALGIKVAKKINGEIISGDSMQVYKYMDIGTAKVLPEEREGVPHHLIDILEPFQKYSVALFQKEARRLIKEINERGKIPIIVGGTGLYIRSVIDPYDFTDFSFDPVFRGKLEQAAKEKGSSYLHQMLEKIDPVAAQKIHSNDLRRIIRALEVYEHTGKPISYYWERGKQSKPQYRLLYYGLTMDRALLYQRINERVDKMIEKGLIAEVKRLLQMGFKESTAMQALGYKEIVQYLEGKITLDEAIYLIKRDTRRFAKRQLTWFRRDPRIKWFDSGKESLEKITEKIITEAGVNNFL</sequence>
<dbReference type="EC" id="2.5.1.75" evidence="1"/>
<dbReference type="EMBL" id="CP000141">
    <property type="protein sequence ID" value="ABB14024.1"/>
    <property type="molecule type" value="Genomic_DNA"/>
</dbReference>
<dbReference type="RefSeq" id="WP_011344301.1">
    <property type="nucleotide sequence ID" value="NC_007503.1"/>
</dbReference>
<dbReference type="SMR" id="Q3ACA8"/>
<dbReference type="FunCoup" id="Q3ACA8">
    <property type="interactions" value="432"/>
</dbReference>
<dbReference type="STRING" id="246194.CHY_1394"/>
<dbReference type="KEGG" id="chy:CHY_1394"/>
<dbReference type="eggNOG" id="COG0324">
    <property type="taxonomic scope" value="Bacteria"/>
</dbReference>
<dbReference type="HOGENOM" id="CLU_032616_0_1_9"/>
<dbReference type="InParanoid" id="Q3ACA8"/>
<dbReference type="OrthoDB" id="9776390at2"/>
<dbReference type="Proteomes" id="UP000002706">
    <property type="component" value="Chromosome"/>
</dbReference>
<dbReference type="GO" id="GO:0005524">
    <property type="term" value="F:ATP binding"/>
    <property type="evidence" value="ECO:0007669"/>
    <property type="project" value="UniProtKB-UniRule"/>
</dbReference>
<dbReference type="GO" id="GO:0052381">
    <property type="term" value="F:tRNA dimethylallyltransferase activity"/>
    <property type="evidence" value="ECO:0007669"/>
    <property type="project" value="UniProtKB-UniRule"/>
</dbReference>
<dbReference type="GO" id="GO:0006400">
    <property type="term" value="P:tRNA modification"/>
    <property type="evidence" value="ECO:0007669"/>
    <property type="project" value="TreeGrafter"/>
</dbReference>
<dbReference type="FunFam" id="1.10.20.140:FF:000001">
    <property type="entry name" value="tRNA dimethylallyltransferase"/>
    <property type="match status" value="1"/>
</dbReference>
<dbReference type="Gene3D" id="1.10.20.140">
    <property type="match status" value="1"/>
</dbReference>
<dbReference type="Gene3D" id="3.40.50.300">
    <property type="entry name" value="P-loop containing nucleotide triphosphate hydrolases"/>
    <property type="match status" value="1"/>
</dbReference>
<dbReference type="HAMAP" id="MF_00185">
    <property type="entry name" value="IPP_trans"/>
    <property type="match status" value="1"/>
</dbReference>
<dbReference type="InterPro" id="IPR039657">
    <property type="entry name" value="Dimethylallyltransferase"/>
</dbReference>
<dbReference type="InterPro" id="IPR018022">
    <property type="entry name" value="IPT"/>
</dbReference>
<dbReference type="InterPro" id="IPR027417">
    <property type="entry name" value="P-loop_NTPase"/>
</dbReference>
<dbReference type="NCBIfam" id="TIGR00174">
    <property type="entry name" value="miaA"/>
    <property type="match status" value="1"/>
</dbReference>
<dbReference type="PANTHER" id="PTHR11088">
    <property type="entry name" value="TRNA DIMETHYLALLYLTRANSFERASE"/>
    <property type="match status" value="1"/>
</dbReference>
<dbReference type="PANTHER" id="PTHR11088:SF60">
    <property type="entry name" value="TRNA DIMETHYLALLYLTRANSFERASE"/>
    <property type="match status" value="1"/>
</dbReference>
<dbReference type="Pfam" id="PF01715">
    <property type="entry name" value="IPPT"/>
    <property type="match status" value="1"/>
</dbReference>
<dbReference type="SUPFAM" id="SSF52540">
    <property type="entry name" value="P-loop containing nucleoside triphosphate hydrolases"/>
    <property type="match status" value="2"/>
</dbReference>
<accession>Q3ACA8</accession>
<reference key="1">
    <citation type="journal article" date="2005" name="PLoS Genet.">
        <title>Life in hot carbon monoxide: the complete genome sequence of Carboxydothermus hydrogenoformans Z-2901.</title>
        <authorList>
            <person name="Wu M."/>
            <person name="Ren Q."/>
            <person name="Durkin A.S."/>
            <person name="Daugherty S.C."/>
            <person name="Brinkac L.M."/>
            <person name="Dodson R.J."/>
            <person name="Madupu R."/>
            <person name="Sullivan S.A."/>
            <person name="Kolonay J.F."/>
            <person name="Nelson W.C."/>
            <person name="Tallon L.J."/>
            <person name="Jones K.M."/>
            <person name="Ulrich L.E."/>
            <person name="Gonzalez J.M."/>
            <person name="Zhulin I.B."/>
            <person name="Robb F.T."/>
            <person name="Eisen J.A."/>
        </authorList>
    </citation>
    <scope>NUCLEOTIDE SEQUENCE [LARGE SCALE GENOMIC DNA]</scope>
    <source>
        <strain>ATCC BAA-161 / DSM 6008 / Z-2901</strain>
    </source>
</reference>
<gene>
    <name evidence="1" type="primary">miaA</name>
    <name type="ordered locus">CHY_1394</name>
</gene>
<proteinExistence type="inferred from homology"/>